<name>PLSB_ECO27</name>
<gene>
    <name evidence="1" type="primary">plsB</name>
    <name type="ordered locus">E2348C_4356</name>
</gene>
<sequence length="807" mass="91381">MSGWPRIYYKLLNLPLSILVKSKSIPADPAPELGLDTSRPIMYVLPYNSKADLLTLRAQCLAHDLPDPLEPLEIDGTLLPRYVFIHGGPRVFTYYTPKEESIKLFHDYLDLHRSNPNLDVQMVPVSVMFGRAPGREKGEVNPPLRMLNGVQKFFAVLWLGRDSFVRFSPSVSLRRMADEHGTDKTIAQKLARVARMHFARQRLAAVGPRLPARQDLFNKLLASRAIAKAVEDEARSKKISHEKAQQNAIALMEEIAANFSYEMIRLTDRILGFTWNRLYQGINVHNAERVRQLAHDGHELVYVPCHRSHMDYLLLSYVLYHQGLVPPHIAAGINLNFWPAGPIFRRLGAFFIRRTFKGNKLYSTVFREYLGELFSRGYSVEYFVEGGRSRTGRLLDPKTGTLSMTIQAMLRGGTRPITLIPIYIGYEHVMEVGTYAKELRGATKEKESLPQMLRGLSKLRNLGQGYVNFGEPMPLMTYLNQHVPDWRESIDPIEAVRPAWLTPTVNNIAADLMVRINNAGAANAMNLCCTALLASRQRSLTREQLTEQLNCYLDLMRNVPYSTDSTVPSASASELIDHALQMNKFEVEKDTIGDIIILPREQAVLMTYYRNNIAHMLVLPSLMAAIVTQHRHISRDVLMEHVNVLYPMLKAELFLRWDRDELPDVIDALANEMQRQGLITLQDDELHINPAHSRTLQLLAAGARETLQRYAITFWLLSANPSINRGTLEKESRTVAQRLSVLHGINAPEFFDKAVFSSLVLTLRDEGYISDSGDAEPAETMKVYQLLAELITSDVRLTIESATQGEG</sequence>
<organism>
    <name type="scientific">Escherichia coli O127:H6 (strain E2348/69 / EPEC)</name>
    <dbReference type="NCBI Taxonomy" id="574521"/>
    <lineage>
        <taxon>Bacteria</taxon>
        <taxon>Pseudomonadati</taxon>
        <taxon>Pseudomonadota</taxon>
        <taxon>Gammaproteobacteria</taxon>
        <taxon>Enterobacterales</taxon>
        <taxon>Enterobacteriaceae</taxon>
        <taxon>Escherichia</taxon>
    </lineage>
</organism>
<dbReference type="EC" id="2.3.1.15" evidence="1"/>
<dbReference type="EMBL" id="FM180568">
    <property type="protein sequence ID" value="CAS11904.1"/>
    <property type="molecule type" value="Genomic_DNA"/>
</dbReference>
<dbReference type="RefSeq" id="WP_000017354.1">
    <property type="nucleotide sequence ID" value="NC_011601.1"/>
</dbReference>
<dbReference type="SMR" id="B7UPK2"/>
<dbReference type="GeneID" id="75204185"/>
<dbReference type="KEGG" id="ecg:E2348C_4356"/>
<dbReference type="HOGENOM" id="CLU_015407_0_0_6"/>
<dbReference type="UniPathway" id="UPA00557">
    <property type="reaction ID" value="UER00612"/>
</dbReference>
<dbReference type="Proteomes" id="UP000008205">
    <property type="component" value="Chromosome"/>
</dbReference>
<dbReference type="GO" id="GO:0005886">
    <property type="term" value="C:plasma membrane"/>
    <property type="evidence" value="ECO:0007669"/>
    <property type="project" value="UniProtKB-SubCell"/>
</dbReference>
<dbReference type="GO" id="GO:0004366">
    <property type="term" value="F:glycerol-3-phosphate O-acyltransferase activity"/>
    <property type="evidence" value="ECO:0007669"/>
    <property type="project" value="UniProtKB-UniRule"/>
</dbReference>
<dbReference type="GO" id="GO:0016024">
    <property type="term" value="P:CDP-diacylglycerol biosynthetic process"/>
    <property type="evidence" value="ECO:0007669"/>
    <property type="project" value="UniProtKB-UniRule"/>
</dbReference>
<dbReference type="GO" id="GO:0006631">
    <property type="term" value="P:fatty acid metabolic process"/>
    <property type="evidence" value="ECO:0007669"/>
    <property type="project" value="TreeGrafter"/>
</dbReference>
<dbReference type="CDD" id="cd07993">
    <property type="entry name" value="LPLAT_DHAPAT-like"/>
    <property type="match status" value="1"/>
</dbReference>
<dbReference type="HAMAP" id="MF_00393">
    <property type="entry name" value="Glyc3P_acyltrans"/>
    <property type="match status" value="1"/>
</dbReference>
<dbReference type="InterPro" id="IPR022284">
    <property type="entry name" value="GPAT/DHAPAT"/>
</dbReference>
<dbReference type="InterPro" id="IPR045520">
    <property type="entry name" value="GPAT/DHAPAT_C"/>
</dbReference>
<dbReference type="InterPro" id="IPR041728">
    <property type="entry name" value="GPAT/DHAPAT_LPLAT"/>
</dbReference>
<dbReference type="InterPro" id="IPR028354">
    <property type="entry name" value="GPAT_PlsB"/>
</dbReference>
<dbReference type="InterPro" id="IPR002123">
    <property type="entry name" value="Plipid/glycerol_acylTrfase"/>
</dbReference>
<dbReference type="NCBIfam" id="TIGR03703">
    <property type="entry name" value="plsB"/>
    <property type="match status" value="1"/>
</dbReference>
<dbReference type="NCBIfam" id="NF003441">
    <property type="entry name" value="PRK04974.1"/>
    <property type="match status" value="1"/>
</dbReference>
<dbReference type="PANTHER" id="PTHR12563:SF17">
    <property type="entry name" value="DIHYDROXYACETONE PHOSPHATE ACYLTRANSFERASE"/>
    <property type="match status" value="1"/>
</dbReference>
<dbReference type="PANTHER" id="PTHR12563">
    <property type="entry name" value="GLYCEROL-3-PHOSPHATE ACYLTRANSFERASE"/>
    <property type="match status" value="1"/>
</dbReference>
<dbReference type="Pfam" id="PF01553">
    <property type="entry name" value="Acyltransferase"/>
    <property type="match status" value="1"/>
</dbReference>
<dbReference type="Pfam" id="PF19277">
    <property type="entry name" value="GPAT_C"/>
    <property type="match status" value="1"/>
</dbReference>
<dbReference type="PIRSF" id="PIRSF500064">
    <property type="entry name" value="GPAT"/>
    <property type="match status" value="1"/>
</dbReference>
<dbReference type="PIRSF" id="PIRSF000437">
    <property type="entry name" value="GPAT_DHAPAT"/>
    <property type="match status" value="1"/>
</dbReference>
<dbReference type="SMART" id="SM00563">
    <property type="entry name" value="PlsC"/>
    <property type="match status" value="1"/>
</dbReference>
<dbReference type="SUPFAM" id="SSF69593">
    <property type="entry name" value="Glycerol-3-phosphate (1)-acyltransferase"/>
    <property type="match status" value="1"/>
</dbReference>
<comment type="catalytic activity">
    <reaction evidence="1">
        <text>sn-glycerol 3-phosphate + an acyl-CoA = a 1-acyl-sn-glycero-3-phosphate + CoA</text>
        <dbReference type="Rhea" id="RHEA:15325"/>
        <dbReference type="ChEBI" id="CHEBI:57287"/>
        <dbReference type="ChEBI" id="CHEBI:57597"/>
        <dbReference type="ChEBI" id="CHEBI:57970"/>
        <dbReference type="ChEBI" id="CHEBI:58342"/>
        <dbReference type="EC" id="2.3.1.15"/>
    </reaction>
</comment>
<comment type="pathway">
    <text evidence="1">Phospholipid metabolism; CDP-diacylglycerol biosynthesis; CDP-diacylglycerol from sn-glycerol 3-phosphate: step 1/3.</text>
</comment>
<comment type="subcellular location">
    <subcellularLocation>
        <location evidence="1">Cell inner membrane</location>
        <topology evidence="1">Peripheral membrane protein</topology>
        <orientation evidence="1">Cytoplasmic side</orientation>
    </subcellularLocation>
</comment>
<comment type="domain">
    <text evidence="1">The HXXXXD motif is essential for acyltransferase activity and may constitute the binding site for the phosphate moiety of the glycerol-3-phosphate.</text>
</comment>
<comment type="similarity">
    <text evidence="1">Belongs to the GPAT/DAPAT family.</text>
</comment>
<proteinExistence type="inferred from homology"/>
<evidence type="ECO:0000255" key="1">
    <source>
        <dbReference type="HAMAP-Rule" id="MF_00393"/>
    </source>
</evidence>
<protein>
    <recommendedName>
        <fullName evidence="1">Glycerol-3-phosphate acyltransferase</fullName>
        <shortName evidence="1">GPAT</shortName>
        <ecNumber evidence="1">2.3.1.15</ecNumber>
    </recommendedName>
</protein>
<keyword id="KW-0012">Acyltransferase</keyword>
<keyword id="KW-0997">Cell inner membrane</keyword>
<keyword id="KW-1003">Cell membrane</keyword>
<keyword id="KW-0444">Lipid biosynthesis</keyword>
<keyword id="KW-0443">Lipid metabolism</keyword>
<keyword id="KW-0472">Membrane</keyword>
<keyword id="KW-0594">Phospholipid biosynthesis</keyword>
<keyword id="KW-1208">Phospholipid metabolism</keyword>
<keyword id="KW-1185">Reference proteome</keyword>
<keyword id="KW-0808">Transferase</keyword>
<feature type="chain" id="PRO_1000192403" description="Glycerol-3-phosphate acyltransferase">
    <location>
        <begin position="1"/>
        <end position="807"/>
    </location>
</feature>
<feature type="short sequence motif" description="HXXXXD motif">
    <location>
        <begin position="305"/>
        <end position="310"/>
    </location>
</feature>
<reference key="1">
    <citation type="journal article" date="2009" name="J. Bacteriol.">
        <title>Complete genome sequence and comparative genome analysis of enteropathogenic Escherichia coli O127:H6 strain E2348/69.</title>
        <authorList>
            <person name="Iguchi A."/>
            <person name="Thomson N.R."/>
            <person name="Ogura Y."/>
            <person name="Saunders D."/>
            <person name="Ooka T."/>
            <person name="Henderson I.R."/>
            <person name="Harris D."/>
            <person name="Asadulghani M."/>
            <person name="Kurokawa K."/>
            <person name="Dean P."/>
            <person name="Kenny B."/>
            <person name="Quail M.A."/>
            <person name="Thurston S."/>
            <person name="Dougan G."/>
            <person name="Hayashi T."/>
            <person name="Parkhill J."/>
            <person name="Frankel G."/>
        </authorList>
    </citation>
    <scope>NUCLEOTIDE SEQUENCE [LARGE SCALE GENOMIC DNA]</scope>
    <source>
        <strain>E2348/69 / EPEC</strain>
    </source>
</reference>
<accession>B7UPK2</accession>